<gene>
    <name evidence="1" type="primary">thi4</name>
    <name type="ordered locus">PF1530</name>
</gene>
<evidence type="ECO:0000255" key="1">
    <source>
        <dbReference type="HAMAP-Rule" id="MF_00304"/>
    </source>
</evidence>
<feature type="chain" id="PRO_0000153952" description="Thiamine thiazole synthase">
    <location>
        <begin position="1"/>
        <end position="252"/>
    </location>
</feature>
<feature type="binding site" description="in other chain" evidence="1">
    <location>
        <position position="35"/>
    </location>
    <ligand>
        <name>NAD(+)</name>
        <dbReference type="ChEBI" id="CHEBI:57540"/>
        <note>ligand shared between two adjacent protomers</note>
    </ligand>
</feature>
<feature type="binding site" description="in other chain" evidence="1">
    <location>
        <begin position="54"/>
        <end position="55"/>
    </location>
    <ligand>
        <name>NAD(+)</name>
        <dbReference type="ChEBI" id="CHEBI:57540"/>
        <note>ligand shared between two adjacent protomers</note>
    </ligand>
</feature>
<feature type="binding site" description="in other chain" evidence="1">
    <location>
        <position position="62"/>
    </location>
    <ligand>
        <name>NAD(+)</name>
        <dbReference type="ChEBI" id="CHEBI:57540"/>
        <note>ligand shared between two adjacent protomers</note>
    </ligand>
</feature>
<feature type="binding site" description="in other chain" evidence="1">
    <location>
        <position position="126"/>
    </location>
    <ligand>
        <name>NAD(+)</name>
        <dbReference type="ChEBI" id="CHEBI:57540"/>
        <note>ligand shared between two adjacent protomers</note>
    </ligand>
</feature>
<feature type="binding site" evidence="1">
    <location>
        <begin position="152"/>
        <end position="154"/>
    </location>
    <ligand>
        <name>NAD(+)</name>
        <dbReference type="ChEBI" id="CHEBI:57540"/>
        <note>ligand shared between two adjacent protomers</note>
    </ligand>
</feature>
<feature type="binding site" evidence="1">
    <location>
        <position position="154"/>
    </location>
    <ligand>
        <name>Fe cation</name>
        <dbReference type="ChEBI" id="CHEBI:24875"/>
        <note>ligand shared between two adjacent protomers</note>
    </ligand>
</feature>
<feature type="binding site" description="in other chain" evidence="1">
    <location>
        <position position="169"/>
    </location>
    <ligand>
        <name>Fe cation</name>
        <dbReference type="ChEBI" id="CHEBI:24875"/>
        <note>ligand shared between two adjacent protomers</note>
    </ligand>
</feature>
<feature type="binding site" description="in other chain" evidence="1">
    <location>
        <position position="217"/>
    </location>
    <ligand>
        <name>NAD(+)</name>
        <dbReference type="ChEBI" id="CHEBI:57540"/>
        <note>ligand shared between two adjacent protomers</note>
    </ligand>
</feature>
<feature type="binding site" evidence="1">
    <location>
        <position position="227"/>
    </location>
    <ligand>
        <name>glycine</name>
        <dbReference type="ChEBI" id="CHEBI:57305"/>
    </ligand>
</feature>
<reference key="1">
    <citation type="journal article" date="1999" name="Genetics">
        <title>Divergence of the hyperthermophilic archaea Pyrococcus furiosus and P. horikoshii inferred from complete genomic sequences.</title>
        <authorList>
            <person name="Maeder D.L."/>
            <person name="Weiss R.B."/>
            <person name="Dunn D.M."/>
            <person name="Cherry J.L."/>
            <person name="Gonzalez J.M."/>
            <person name="DiRuggiero J."/>
            <person name="Robb F.T."/>
        </authorList>
    </citation>
    <scope>NUCLEOTIDE SEQUENCE [LARGE SCALE GENOMIC DNA]</scope>
    <source>
        <strain>ATCC 43587 / DSM 3638 / JCM 8422 / Vc1</strain>
    </source>
</reference>
<keyword id="KW-0408">Iron</keyword>
<keyword id="KW-0479">Metal-binding</keyword>
<keyword id="KW-0520">NAD</keyword>
<keyword id="KW-1185">Reference proteome</keyword>
<keyword id="KW-0784">Thiamine biosynthesis</keyword>
<keyword id="KW-0808">Transferase</keyword>
<organism>
    <name type="scientific">Pyrococcus furiosus (strain ATCC 43587 / DSM 3638 / JCM 8422 / Vc1)</name>
    <dbReference type="NCBI Taxonomy" id="186497"/>
    <lineage>
        <taxon>Archaea</taxon>
        <taxon>Methanobacteriati</taxon>
        <taxon>Methanobacteriota</taxon>
        <taxon>Thermococci</taxon>
        <taxon>Thermococcales</taxon>
        <taxon>Thermococcaceae</taxon>
        <taxon>Pyrococcus</taxon>
    </lineage>
</organism>
<name>THI4_PYRFU</name>
<comment type="function">
    <text evidence="1">Involved in the biosynthesis of the thiazole moiety of thiamine. Catalyzes the conversion of NAD and glycine to adenosine diphosphate 5-(2-hydroxyethyl)-4-methylthiazole-2-carboxylate (ADT), an adenylated thiazole intermediate, using free sulfide as a source of sulfur.</text>
</comment>
<comment type="catalytic activity">
    <reaction evidence="1">
        <text>hydrogen sulfide + glycine + NAD(+) = ADP-5-ethyl-4-methylthiazole-2-carboxylate + nicotinamide + 3 H2O + H(+)</text>
        <dbReference type="Rhea" id="RHEA:55704"/>
        <dbReference type="ChEBI" id="CHEBI:15377"/>
        <dbReference type="ChEBI" id="CHEBI:15378"/>
        <dbReference type="ChEBI" id="CHEBI:17154"/>
        <dbReference type="ChEBI" id="CHEBI:29919"/>
        <dbReference type="ChEBI" id="CHEBI:57305"/>
        <dbReference type="ChEBI" id="CHEBI:57540"/>
        <dbReference type="ChEBI" id="CHEBI:139151"/>
        <dbReference type="EC" id="2.4.2.59"/>
    </reaction>
</comment>
<comment type="cofactor">
    <cofactor evidence="1">
        <name>Fe(2+)</name>
        <dbReference type="ChEBI" id="CHEBI:29033"/>
    </cofactor>
</comment>
<comment type="pathway">
    <text evidence="1">Cofactor biosynthesis; thiamine diphosphate biosynthesis.</text>
</comment>
<comment type="subunit">
    <text evidence="1">Homooctamer; tetramer of dimers.</text>
</comment>
<comment type="similarity">
    <text evidence="1">Belongs to the THI4 family.</text>
</comment>
<dbReference type="EC" id="2.4.2.59" evidence="1"/>
<dbReference type="EMBL" id="AE009950">
    <property type="protein sequence ID" value="AAL81654.1"/>
    <property type="molecule type" value="Genomic_DNA"/>
</dbReference>
<dbReference type="RefSeq" id="WP_011012677.1">
    <property type="nucleotide sequence ID" value="NZ_CP023154.1"/>
</dbReference>
<dbReference type="SMR" id="Q8U0Q5"/>
<dbReference type="STRING" id="186497.PF1530"/>
<dbReference type="PaxDb" id="186497-PF1530"/>
<dbReference type="KEGG" id="pfu:PF1530"/>
<dbReference type="PATRIC" id="fig|186497.12.peg.1595"/>
<dbReference type="eggNOG" id="arCOG00574">
    <property type="taxonomic scope" value="Archaea"/>
</dbReference>
<dbReference type="HOGENOM" id="CLU_053727_2_0_2"/>
<dbReference type="OrthoDB" id="4240at2157"/>
<dbReference type="PhylomeDB" id="Q8U0Q5"/>
<dbReference type="UniPathway" id="UPA00060"/>
<dbReference type="Proteomes" id="UP000001013">
    <property type="component" value="Chromosome"/>
</dbReference>
<dbReference type="GO" id="GO:0005506">
    <property type="term" value="F:iron ion binding"/>
    <property type="evidence" value="ECO:0007669"/>
    <property type="project" value="UniProtKB-UniRule"/>
</dbReference>
<dbReference type="GO" id="GO:0016763">
    <property type="term" value="F:pentosyltransferase activity"/>
    <property type="evidence" value="ECO:0007669"/>
    <property type="project" value="UniProtKB-UniRule"/>
</dbReference>
<dbReference type="GO" id="GO:0009228">
    <property type="term" value="P:thiamine biosynthetic process"/>
    <property type="evidence" value="ECO:0007669"/>
    <property type="project" value="UniProtKB-KW"/>
</dbReference>
<dbReference type="GO" id="GO:0009229">
    <property type="term" value="P:thiamine diphosphate biosynthetic process"/>
    <property type="evidence" value="ECO:0007669"/>
    <property type="project" value="UniProtKB-UniRule"/>
</dbReference>
<dbReference type="GO" id="GO:0052837">
    <property type="term" value="P:thiazole biosynthetic process"/>
    <property type="evidence" value="ECO:0007669"/>
    <property type="project" value="UniProtKB-UniRule"/>
</dbReference>
<dbReference type="Gene3D" id="3.50.50.60">
    <property type="entry name" value="FAD/NAD(P)-binding domain"/>
    <property type="match status" value="1"/>
</dbReference>
<dbReference type="HAMAP" id="MF_00304">
    <property type="entry name" value="Thi4"/>
    <property type="match status" value="1"/>
</dbReference>
<dbReference type="InterPro" id="IPR036188">
    <property type="entry name" value="FAD/NAD-bd_sf"/>
</dbReference>
<dbReference type="InterPro" id="IPR002922">
    <property type="entry name" value="Thi4_fam"/>
</dbReference>
<dbReference type="InterPro" id="IPR022828">
    <property type="entry name" value="Thi4_prok"/>
</dbReference>
<dbReference type="NCBIfam" id="TIGR00292">
    <property type="entry name" value="sulfide-dependent adenosine diphosphate thiazole synthase"/>
    <property type="match status" value="1"/>
</dbReference>
<dbReference type="PANTHER" id="PTHR43422">
    <property type="entry name" value="THIAMINE THIAZOLE SYNTHASE"/>
    <property type="match status" value="1"/>
</dbReference>
<dbReference type="PANTHER" id="PTHR43422:SF3">
    <property type="entry name" value="THIAMINE THIAZOLE SYNTHASE"/>
    <property type="match status" value="1"/>
</dbReference>
<dbReference type="Pfam" id="PF01946">
    <property type="entry name" value="Thi4"/>
    <property type="match status" value="1"/>
</dbReference>
<dbReference type="PRINTS" id="PR00420">
    <property type="entry name" value="RNGMNOXGNASE"/>
</dbReference>
<dbReference type="SUPFAM" id="SSF51905">
    <property type="entry name" value="FAD/NAD(P)-binding domain"/>
    <property type="match status" value="1"/>
</dbReference>
<proteinExistence type="inferred from homology"/>
<accession>Q8U0Q5</accession>
<sequence length="252" mass="27157">MLKDVVISRAIVESYFKDLLNNLELDVAIVGAGPSGMVAGYYLAKGGAKVAIFEKKLSIGGGIWGGGMGFNKIVVQEEAKEILDEFDIRYEEFEKGYYVADAIEVATTIASKTVKAGVKIFNMVEVEDLVVKDDRVSGIVINWTPVKMTGLHVDPLTVEAKYVIDSTGHGAQVTQFLLKRGLIEKIPGEGAMWAEMGEKLTVENTKEVFPGLYVTGMAANAVSGAPRMGPIFGGMFLSGRKAAMEILQKLGL</sequence>
<protein>
    <recommendedName>
        <fullName evidence="1">Thiamine thiazole synthase</fullName>
        <ecNumber evidence="1">2.4.2.59</ecNumber>
    </recommendedName>
</protein>